<feature type="chain" id="PRO_0000051967" description="Aromatase">
    <location>
        <begin position="1"/>
        <end position="509"/>
    </location>
</feature>
<feature type="binding site" description="axial binding residue" evidence="1">
    <location>
        <position position="456"/>
    </location>
    <ligand>
        <name>heme</name>
        <dbReference type="ChEBI" id="CHEBI:30413"/>
    </ligand>
    <ligandPart>
        <name>Fe</name>
        <dbReference type="ChEBI" id="CHEBI:18248"/>
    </ligandPart>
</feature>
<gene>
    <name type="primary">cyp19a1a</name>
    <name type="synonym">cyp19</name>
    <name type="synonym">cyp19a</name>
</gene>
<organism>
    <name type="scientific">Danio rerio</name>
    <name type="common">Zebrafish</name>
    <name type="synonym">Brachydanio rerio</name>
    <dbReference type="NCBI Taxonomy" id="7955"/>
    <lineage>
        <taxon>Eukaryota</taxon>
        <taxon>Metazoa</taxon>
        <taxon>Chordata</taxon>
        <taxon>Craniata</taxon>
        <taxon>Vertebrata</taxon>
        <taxon>Euteleostomi</taxon>
        <taxon>Actinopterygii</taxon>
        <taxon>Neopterygii</taxon>
        <taxon>Teleostei</taxon>
        <taxon>Ostariophysi</taxon>
        <taxon>Cypriniformes</taxon>
        <taxon>Danionidae</taxon>
        <taxon>Danioninae</taxon>
        <taxon>Danio</taxon>
    </lineage>
</organism>
<dbReference type="EC" id="1.14.14.14" evidence="2"/>
<dbReference type="EMBL" id="AF004521">
    <property type="protein sequence ID" value="AAB65788.1"/>
    <property type="molecule type" value="mRNA"/>
</dbReference>
<dbReference type="SMR" id="O42145"/>
<dbReference type="FunCoup" id="O42145">
    <property type="interactions" value="49"/>
</dbReference>
<dbReference type="STRING" id="7955.ENSDARP00000111604"/>
<dbReference type="PaxDb" id="7955-ENSDARP00000111604"/>
<dbReference type="AGR" id="ZFIN:ZDB-GENE-990415-43"/>
<dbReference type="ZFIN" id="ZDB-GENE-990415-43">
    <property type="gene designation" value="cyp19a1a"/>
</dbReference>
<dbReference type="eggNOG" id="KOG0157">
    <property type="taxonomic scope" value="Eukaryota"/>
</dbReference>
<dbReference type="InParanoid" id="O42145"/>
<dbReference type="Reactome" id="R-DRE-193144">
    <property type="pathway name" value="Estrogen biosynthesis"/>
</dbReference>
<dbReference type="Reactome" id="R-DRE-211976">
    <property type="pathway name" value="Endogenous sterols"/>
</dbReference>
<dbReference type="PRO" id="PR:O42145"/>
<dbReference type="Proteomes" id="UP000000437">
    <property type="component" value="Unplaced"/>
</dbReference>
<dbReference type="GO" id="GO:0005783">
    <property type="term" value="C:endoplasmic reticulum"/>
    <property type="evidence" value="ECO:0000318"/>
    <property type="project" value="GO_Central"/>
</dbReference>
<dbReference type="GO" id="GO:0016020">
    <property type="term" value="C:membrane"/>
    <property type="evidence" value="ECO:0007669"/>
    <property type="project" value="UniProtKB-SubCell"/>
</dbReference>
<dbReference type="GO" id="GO:0070330">
    <property type="term" value="F:aromatase activity"/>
    <property type="evidence" value="ECO:0000318"/>
    <property type="project" value="GO_Central"/>
</dbReference>
<dbReference type="GO" id="GO:0020037">
    <property type="term" value="F:heme binding"/>
    <property type="evidence" value="ECO:0007669"/>
    <property type="project" value="InterPro"/>
</dbReference>
<dbReference type="GO" id="GO:0005506">
    <property type="term" value="F:iron ion binding"/>
    <property type="evidence" value="ECO:0007669"/>
    <property type="project" value="InterPro"/>
</dbReference>
<dbReference type="GO" id="GO:0019099">
    <property type="term" value="P:female germ-line sex determination"/>
    <property type="evidence" value="ECO:0000315"/>
    <property type="project" value="ZFIN"/>
</dbReference>
<dbReference type="GO" id="GO:0008585">
    <property type="term" value="P:female gonad development"/>
    <property type="evidence" value="ECO:0000315"/>
    <property type="project" value="ZFIN"/>
</dbReference>
<dbReference type="GO" id="GO:0030237">
    <property type="term" value="P:female sex determination"/>
    <property type="evidence" value="ECO:0000315"/>
    <property type="project" value="ZFIN"/>
</dbReference>
<dbReference type="GO" id="GO:0046660">
    <property type="term" value="P:female sex differentiation"/>
    <property type="evidence" value="ECO:0000315"/>
    <property type="project" value="ZFIN"/>
</dbReference>
<dbReference type="GO" id="GO:0019100">
    <property type="term" value="P:male germ-line sex determination"/>
    <property type="evidence" value="ECO:0000315"/>
    <property type="project" value="ZFIN"/>
</dbReference>
<dbReference type="GO" id="GO:0001541">
    <property type="term" value="P:ovarian follicle development"/>
    <property type="evidence" value="ECO:0000315"/>
    <property type="project" value="ZFIN"/>
</dbReference>
<dbReference type="GO" id="GO:1904076">
    <property type="term" value="P:regulation of estrogen biosynthetic process"/>
    <property type="evidence" value="ECO:0000315"/>
    <property type="project" value="ZFIN"/>
</dbReference>
<dbReference type="GO" id="GO:0032355">
    <property type="term" value="P:response to estradiol"/>
    <property type="evidence" value="ECO:0000314"/>
    <property type="project" value="ZFIN"/>
</dbReference>
<dbReference type="GO" id="GO:0009410">
    <property type="term" value="P:response to xenobiotic stimulus"/>
    <property type="evidence" value="ECO:0000314"/>
    <property type="project" value="ZFIN"/>
</dbReference>
<dbReference type="CDD" id="cd20616">
    <property type="entry name" value="CYP19A1"/>
    <property type="match status" value="1"/>
</dbReference>
<dbReference type="FunFam" id="1.10.630.10:FF:000032">
    <property type="entry name" value="Cytochrome P450 aromatase"/>
    <property type="match status" value="1"/>
</dbReference>
<dbReference type="Gene3D" id="1.10.630.10">
    <property type="entry name" value="Cytochrome P450"/>
    <property type="match status" value="1"/>
</dbReference>
<dbReference type="InterPro" id="IPR001128">
    <property type="entry name" value="Cyt_P450"/>
</dbReference>
<dbReference type="InterPro" id="IPR017972">
    <property type="entry name" value="Cyt_P450_CS"/>
</dbReference>
<dbReference type="InterPro" id="IPR002401">
    <property type="entry name" value="Cyt_P450_E_grp-I"/>
</dbReference>
<dbReference type="InterPro" id="IPR036396">
    <property type="entry name" value="Cyt_P450_sf"/>
</dbReference>
<dbReference type="InterPro" id="IPR050196">
    <property type="entry name" value="Cytochrome_P450_Monoox"/>
</dbReference>
<dbReference type="PANTHER" id="PTHR24291:SF204">
    <property type="entry name" value="AROMATASE"/>
    <property type="match status" value="1"/>
</dbReference>
<dbReference type="PANTHER" id="PTHR24291">
    <property type="entry name" value="CYTOCHROME P450 FAMILY 4"/>
    <property type="match status" value="1"/>
</dbReference>
<dbReference type="Pfam" id="PF00067">
    <property type="entry name" value="p450"/>
    <property type="match status" value="1"/>
</dbReference>
<dbReference type="PRINTS" id="PR00463">
    <property type="entry name" value="EP450I"/>
</dbReference>
<dbReference type="PRINTS" id="PR00385">
    <property type="entry name" value="P450"/>
</dbReference>
<dbReference type="SUPFAM" id="SSF48264">
    <property type="entry name" value="Cytochrome P450"/>
    <property type="match status" value="1"/>
</dbReference>
<dbReference type="PROSITE" id="PS00086">
    <property type="entry name" value="CYTOCHROME_P450"/>
    <property type="match status" value="1"/>
</dbReference>
<evidence type="ECO:0000250" key="1"/>
<evidence type="ECO:0000250" key="2">
    <source>
        <dbReference type="UniProtKB" id="P11511"/>
    </source>
</evidence>
<evidence type="ECO:0000305" key="3"/>
<protein>
    <recommendedName>
        <fullName>Aromatase</fullName>
        <ecNumber evidence="2">1.14.14.14</ecNumber>
    </recommendedName>
    <alternativeName>
        <fullName>CYPXIX</fullName>
    </alternativeName>
    <alternativeName>
        <fullName>Cytochrome P-450AROM</fullName>
    </alternativeName>
    <alternativeName>
        <fullName>Cytochrome P450 19A1a</fullName>
    </alternativeName>
    <alternativeName>
        <fullName>Estrogen synthase</fullName>
    </alternativeName>
</protein>
<keyword id="KW-0349">Heme</keyword>
<keyword id="KW-0408">Iron</keyword>
<keyword id="KW-0472">Membrane</keyword>
<keyword id="KW-0479">Metal-binding</keyword>
<keyword id="KW-0503">Monooxygenase</keyword>
<keyword id="KW-0560">Oxidoreductase</keyword>
<keyword id="KW-1185">Reference proteome</keyword>
<accession>O42145</accession>
<reference key="1">
    <citation type="submission" date="1997-05" db="EMBL/GenBank/DDBJ databases">
        <title>Isolation and characterization of a zebrafish (Danio rerio) aromatase cDNA.</title>
        <authorList>
            <person name="Bauer M.P."/>
            <person name="Goetz F.W."/>
        </authorList>
    </citation>
    <scope>NUCLEOTIDE SEQUENCE [MRNA]</scope>
    <source>
        <tissue>Ovary</tissue>
    </source>
</reference>
<sequence>MAGDLLQPCGMKPVRLGEAVVDLLIQRAHNGTERAQDNACGATATILLLLLCLLLAIRHHRPHKSHIPGPSFFFGLGPVVSYCRFIWSGIGTASNYYNSKYGDIVRVWINGEETLILSRSSAVYHVLRKSLYTSRFGSKLGLQCIGMHEQGIIFNSNVALWKKVRAFYAKALTGPGLQRTMEICTTSTNSHLDDLSQLTDAQGQLDILNLLRCIVVDVSNRLFLGVPLNEHDLLQKIHKYFDTWQTVLIKPDVYFRLDWLHRKHKRDAQELQDAITALIEQKKVQLAHAEKLDHLDFTAELIFAQSHGELSAENVRQCVLEMVIAAPDTLSISLFFMLLLLKQNPDVELKILQEMDSVLAGQSLQHSHLSKLQILESFINESLRFHPVVDFTMRRALDDDVIEGYNVKKGTNIILNVGRMHRSEFFSKPNQFSLDNFHKNVPSRFFQPFGSGPRSCVGKHIAMVMMKSILVALLSRFSVCPMKACTVENIPQTNNLSQQPVEEPSSLSV</sequence>
<proteinExistence type="evidence at transcript level"/>
<name>C19AA_DANRE</name>
<comment type="function">
    <text evidence="1">Catalyzes the formation of aromatic C18 estrogens from C19 androgens.</text>
</comment>
<comment type="catalytic activity">
    <reaction evidence="2">
        <text>testosterone + 3 reduced [NADPH--hemoprotein reductase] + 3 O2 = 17beta-estradiol + formate + 3 oxidized [NADPH--hemoprotein reductase] + 4 H2O + 4 H(+)</text>
        <dbReference type="Rhea" id="RHEA:38191"/>
        <dbReference type="Rhea" id="RHEA-COMP:11964"/>
        <dbReference type="Rhea" id="RHEA-COMP:11965"/>
        <dbReference type="ChEBI" id="CHEBI:15377"/>
        <dbReference type="ChEBI" id="CHEBI:15378"/>
        <dbReference type="ChEBI" id="CHEBI:15379"/>
        <dbReference type="ChEBI" id="CHEBI:15740"/>
        <dbReference type="ChEBI" id="CHEBI:16469"/>
        <dbReference type="ChEBI" id="CHEBI:17347"/>
        <dbReference type="ChEBI" id="CHEBI:57618"/>
        <dbReference type="ChEBI" id="CHEBI:58210"/>
        <dbReference type="EC" id="1.14.14.14"/>
    </reaction>
</comment>
<comment type="catalytic activity">
    <reaction evidence="2">
        <text>androst-4-ene-3,17-dione + 3 reduced [NADPH--hemoprotein reductase] + 3 O2 = estrone + formate + 3 oxidized [NADPH--hemoprotein reductase] + 4 H2O + 4 H(+)</text>
        <dbReference type="Rhea" id="RHEA:38195"/>
        <dbReference type="Rhea" id="RHEA-COMP:11964"/>
        <dbReference type="Rhea" id="RHEA-COMP:11965"/>
        <dbReference type="ChEBI" id="CHEBI:15377"/>
        <dbReference type="ChEBI" id="CHEBI:15378"/>
        <dbReference type="ChEBI" id="CHEBI:15379"/>
        <dbReference type="ChEBI" id="CHEBI:15740"/>
        <dbReference type="ChEBI" id="CHEBI:16422"/>
        <dbReference type="ChEBI" id="CHEBI:17263"/>
        <dbReference type="ChEBI" id="CHEBI:57618"/>
        <dbReference type="ChEBI" id="CHEBI:58210"/>
        <dbReference type="EC" id="1.14.14.14"/>
    </reaction>
</comment>
<comment type="cofactor">
    <cofactor evidence="1">
        <name>heme</name>
        <dbReference type="ChEBI" id="CHEBI:30413"/>
    </cofactor>
</comment>
<comment type="subcellular location">
    <subcellularLocation>
        <location>Membrane</location>
        <topology>Peripheral membrane protein</topology>
    </subcellularLocation>
</comment>
<comment type="similarity">
    <text evidence="3">Belongs to the cytochrome P450 family.</text>
</comment>